<organism>
    <name type="scientific">Leuconostoc citreum (strain KM20)</name>
    <dbReference type="NCBI Taxonomy" id="349519"/>
    <lineage>
        <taxon>Bacteria</taxon>
        <taxon>Bacillati</taxon>
        <taxon>Bacillota</taxon>
        <taxon>Bacilli</taxon>
        <taxon>Lactobacillales</taxon>
        <taxon>Lactobacillaceae</taxon>
        <taxon>Leuconostoc</taxon>
    </lineage>
</organism>
<accession>B1MW14</accession>
<dbReference type="EMBL" id="DQ489736">
    <property type="protein sequence ID" value="ACA83418.1"/>
    <property type="molecule type" value="Genomic_DNA"/>
</dbReference>
<dbReference type="RefSeq" id="WP_004904438.1">
    <property type="nucleotide sequence ID" value="NC_010471.1"/>
</dbReference>
<dbReference type="SMR" id="B1MW14"/>
<dbReference type="STRING" id="349519.LCK_01595"/>
<dbReference type="GeneID" id="61103241"/>
<dbReference type="KEGG" id="lci:LCK_01595"/>
<dbReference type="eggNOG" id="COG0087">
    <property type="taxonomic scope" value="Bacteria"/>
</dbReference>
<dbReference type="HOGENOM" id="CLU_044142_4_1_9"/>
<dbReference type="OrthoDB" id="9806135at2"/>
<dbReference type="Proteomes" id="UP000002166">
    <property type="component" value="Chromosome"/>
</dbReference>
<dbReference type="GO" id="GO:0022625">
    <property type="term" value="C:cytosolic large ribosomal subunit"/>
    <property type="evidence" value="ECO:0007669"/>
    <property type="project" value="TreeGrafter"/>
</dbReference>
<dbReference type="GO" id="GO:0019843">
    <property type="term" value="F:rRNA binding"/>
    <property type="evidence" value="ECO:0007669"/>
    <property type="project" value="UniProtKB-UniRule"/>
</dbReference>
<dbReference type="GO" id="GO:0003735">
    <property type="term" value="F:structural constituent of ribosome"/>
    <property type="evidence" value="ECO:0007669"/>
    <property type="project" value="InterPro"/>
</dbReference>
<dbReference type="GO" id="GO:0006412">
    <property type="term" value="P:translation"/>
    <property type="evidence" value="ECO:0007669"/>
    <property type="project" value="UniProtKB-UniRule"/>
</dbReference>
<dbReference type="FunFam" id="2.40.30.10:FF:000004">
    <property type="entry name" value="50S ribosomal protein L3"/>
    <property type="match status" value="1"/>
</dbReference>
<dbReference type="FunFam" id="3.30.160.810:FF:000002">
    <property type="entry name" value="50S ribosomal protein L3"/>
    <property type="match status" value="1"/>
</dbReference>
<dbReference type="Gene3D" id="3.30.160.810">
    <property type="match status" value="1"/>
</dbReference>
<dbReference type="Gene3D" id="2.40.30.10">
    <property type="entry name" value="Translation factors"/>
    <property type="match status" value="1"/>
</dbReference>
<dbReference type="HAMAP" id="MF_01325_B">
    <property type="entry name" value="Ribosomal_uL3_B"/>
    <property type="match status" value="1"/>
</dbReference>
<dbReference type="InterPro" id="IPR000597">
    <property type="entry name" value="Ribosomal_uL3"/>
</dbReference>
<dbReference type="InterPro" id="IPR019927">
    <property type="entry name" value="Ribosomal_uL3_bac/org-type"/>
</dbReference>
<dbReference type="InterPro" id="IPR009000">
    <property type="entry name" value="Transl_B-barrel_sf"/>
</dbReference>
<dbReference type="NCBIfam" id="TIGR03625">
    <property type="entry name" value="L3_bact"/>
    <property type="match status" value="1"/>
</dbReference>
<dbReference type="PANTHER" id="PTHR11229">
    <property type="entry name" value="50S RIBOSOMAL PROTEIN L3"/>
    <property type="match status" value="1"/>
</dbReference>
<dbReference type="PANTHER" id="PTHR11229:SF16">
    <property type="entry name" value="LARGE RIBOSOMAL SUBUNIT PROTEIN UL3C"/>
    <property type="match status" value="1"/>
</dbReference>
<dbReference type="Pfam" id="PF00297">
    <property type="entry name" value="Ribosomal_L3"/>
    <property type="match status" value="1"/>
</dbReference>
<dbReference type="SUPFAM" id="SSF50447">
    <property type="entry name" value="Translation proteins"/>
    <property type="match status" value="1"/>
</dbReference>
<protein>
    <recommendedName>
        <fullName evidence="1">Large ribosomal subunit protein uL3</fullName>
    </recommendedName>
    <alternativeName>
        <fullName evidence="2">50S ribosomal protein L3</fullName>
    </alternativeName>
</protein>
<keyword id="KW-1185">Reference proteome</keyword>
<keyword id="KW-0687">Ribonucleoprotein</keyword>
<keyword id="KW-0689">Ribosomal protein</keyword>
<keyword id="KW-0694">RNA-binding</keyword>
<keyword id="KW-0699">rRNA-binding</keyword>
<evidence type="ECO:0000255" key="1">
    <source>
        <dbReference type="HAMAP-Rule" id="MF_01325"/>
    </source>
</evidence>
<evidence type="ECO:0000305" key="2"/>
<feature type="chain" id="PRO_1000141883" description="Large ribosomal subunit protein uL3">
    <location>
        <begin position="1"/>
        <end position="227"/>
    </location>
</feature>
<proteinExistence type="inferred from homology"/>
<sequence>MTKGILGRKVGMTQVFTESGELIAVTAVEATPNVVLQVKNIATDGYNAIQLGYQDKRTVLSNKPEQGHASKANTTPKRYVREVRDAEGEFNAGDEIKVDTFQAGDYVDVTGITKGHGFQGAIKKLGQSRGPMAHGSRYHRRPGSMGAIINRVFKGKLLPGRMGNNKRTMQNVAIVHVDVENNLLLLKGNVPGANKSLLTIKSTVKVNAKHPEVKMAGVSASATTEEA</sequence>
<reference key="1">
    <citation type="journal article" date="2008" name="J. Bacteriol.">
        <title>Complete genome sequence of Leuconostoc citreum KM20.</title>
        <authorList>
            <person name="Kim J.F."/>
            <person name="Jeong H."/>
            <person name="Lee J.-S."/>
            <person name="Choi S.-H."/>
            <person name="Ha M."/>
            <person name="Hur C.-G."/>
            <person name="Kim J.-S."/>
            <person name="Lee S."/>
            <person name="Park H.-S."/>
            <person name="Park Y.-H."/>
            <person name="Oh T.K."/>
        </authorList>
    </citation>
    <scope>NUCLEOTIDE SEQUENCE [LARGE SCALE GENOMIC DNA]</scope>
    <source>
        <strain>KM20</strain>
    </source>
</reference>
<gene>
    <name evidence="1" type="primary">rplC</name>
    <name type="ordered locus">LCK_01595</name>
</gene>
<comment type="function">
    <text evidence="1">One of the primary rRNA binding proteins, it binds directly near the 3'-end of the 23S rRNA, where it nucleates assembly of the 50S subunit.</text>
</comment>
<comment type="subunit">
    <text evidence="1">Part of the 50S ribosomal subunit. Forms a cluster with proteins L14 and L19.</text>
</comment>
<comment type="similarity">
    <text evidence="1">Belongs to the universal ribosomal protein uL3 family.</text>
</comment>
<name>RL3_LEUCK</name>